<sequence length="90" mass="10660">MKTAIFTVVLALAVFAVLSFGWEANEKALSEEFTELIHEKEAASETEARECRYFWGECHDRMPCCDWLVCRYKWPITYNICVWNRTFPEK</sequence>
<proteinExistence type="evidence at transcript level"/>
<accession>D2Y2A6</accession>
<organism>
    <name type="scientific">Cyriopagopus hainanus</name>
    <name type="common">Chinese bird spider</name>
    <name type="synonym">Haplopelma hainanum</name>
    <dbReference type="NCBI Taxonomy" id="209901"/>
    <lineage>
        <taxon>Eukaryota</taxon>
        <taxon>Metazoa</taxon>
        <taxon>Ecdysozoa</taxon>
        <taxon>Arthropoda</taxon>
        <taxon>Chelicerata</taxon>
        <taxon>Arachnida</taxon>
        <taxon>Araneae</taxon>
        <taxon>Mygalomorphae</taxon>
        <taxon>Theraphosidae</taxon>
        <taxon>Haplopelma</taxon>
    </lineage>
</organism>
<protein>
    <recommendedName>
        <fullName>U7-theraphotoxin-Hhn1e</fullName>
        <shortName>U7-TRTX-Hhn1e</shortName>
    </recommendedName>
    <alternativeName>
        <fullName>Hainantoxin-XIII-6</fullName>
        <shortName>HNTX-XIII-6</shortName>
    </alternativeName>
</protein>
<name>H13F1_CYRHA</name>
<keyword id="KW-1015">Disulfide bond</keyword>
<keyword id="KW-0872">Ion channel impairing toxin</keyword>
<keyword id="KW-0960">Knottin</keyword>
<keyword id="KW-0964">Secreted</keyword>
<keyword id="KW-0732">Signal</keyword>
<keyword id="KW-0800">Toxin</keyword>
<dbReference type="EMBL" id="GU292983">
    <property type="protein sequence ID" value="ADB56799.1"/>
    <property type="molecule type" value="mRNA"/>
</dbReference>
<dbReference type="SMR" id="D2Y2A6"/>
<dbReference type="ArachnoServer" id="AS001609">
    <property type="toxin name" value="U7-theraphotoxin-Hhn1e"/>
</dbReference>
<dbReference type="GO" id="GO:0005576">
    <property type="term" value="C:extracellular region"/>
    <property type="evidence" value="ECO:0007669"/>
    <property type="project" value="UniProtKB-SubCell"/>
</dbReference>
<dbReference type="GO" id="GO:0008200">
    <property type="term" value="F:ion channel inhibitor activity"/>
    <property type="evidence" value="ECO:0007669"/>
    <property type="project" value="InterPro"/>
</dbReference>
<dbReference type="GO" id="GO:0090729">
    <property type="term" value="F:toxin activity"/>
    <property type="evidence" value="ECO:0007669"/>
    <property type="project" value="UniProtKB-KW"/>
</dbReference>
<dbReference type="InterPro" id="IPR011696">
    <property type="entry name" value="Huwentoxin-1"/>
</dbReference>
<dbReference type="Pfam" id="PF07740">
    <property type="entry name" value="Toxin_12"/>
    <property type="match status" value="1"/>
</dbReference>
<dbReference type="SUPFAM" id="SSF57059">
    <property type="entry name" value="omega toxin-like"/>
    <property type="match status" value="1"/>
</dbReference>
<feature type="signal peptide" evidence="2">
    <location>
        <begin position="1"/>
        <end position="19"/>
    </location>
</feature>
<feature type="propeptide" id="PRO_0000400701" evidence="1">
    <location>
        <begin position="20"/>
        <end position="50"/>
    </location>
</feature>
<feature type="peptide" id="PRO_0000400702" description="U7-theraphotoxin-Hhn1e">
    <location>
        <begin position="51"/>
        <end position="90"/>
    </location>
</feature>
<feature type="disulfide bond" evidence="1">
    <location>
        <begin position="51"/>
        <end position="65"/>
    </location>
</feature>
<feature type="disulfide bond" evidence="1">
    <location>
        <begin position="58"/>
        <end position="70"/>
    </location>
</feature>
<feature type="disulfide bond" evidence="1">
    <location>
        <begin position="64"/>
        <end position="81"/>
    </location>
</feature>
<evidence type="ECO:0000250" key="1"/>
<evidence type="ECO:0000255" key="2"/>
<evidence type="ECO:0000305" key="3"/>
<reference key="1">
    <citation type="journal article" date="2010" name="J. Proteome Res.">
        <title>Molecular diversification of peptide toxins from the tarantula Haplopelma hainanum (Ornithoctonus hainana) venom based on transcriptomic, peptidomic, and genomic analyses.</title>
        <authorList>
            <person name="Tang X."/>
            <person name="Zhang Y."/>
            <person name="Hu W."/>
            <person name="Xu D."/>
            <person name="Tao H."/>
            <person name="Yang X."/>
            <person name="Li Y."/>
            <person name="Jiang L."/>
            <person name="Liang S."/>
        </authorList>
    </citation>
    <scope>NUCLEOTIDE SEQUENCE [LARGE SCALE MRNA]</scope>
    <source>
        <tissue>Venom gland</tissue>
    </source>
</reference>
<comment type="function">
    <text evidence="1">Ion channel inhibitor.</text>
</comment>
<comment type="subcellular location">
    <subcellularLocation>
        <location evidence="1">Secreted</location>
    </subcellularLocation>
</comment>
<comment type="tissue specificity">
    <text>Expressed by the venom gland.</text>
</comment>
<comment type="domain">
    <text evidence="1">The presence of a 'disulfide through disulfide knot' structurally defines this protein as a knottin.</text>
</comment>
<comment type="similarity">
    <text evidence="3">Belongs to the neurotoxin 10 (Hwtx-1) family. 13 (Hntx-13) subfamily.</text>
</comment>